<organism evidence="4">
    <name type="scientific">Glossotherium robustum</name>
    <name type="common">Ground sloth</name>
    <name type="synonym">Mylodon robustus</name>
    <dbReference type="NCBI Taxonomy" id="2591764"/>
    <lineage>
        <taxon>Eukaryota</taxon>
        <taxon>Metazoa</taxon>
        <taxon>Chordata</taxon>
        <taxon>Craniata</taxon>
        <taxon>Vertebrata</taxon>
        <taxon>Euteleostomi</taxon>
        <taxon>Mammalia</taxon>
        <taxon>Eutheria</taxon>
        <taxon>Xenarthra</taxon>
        <taxon>Pilosa</taxon>
        <taxon>Folivora</taxon>
        <taxon>Mylodontidae</taxon>
        <taxon>Glossotherium</taxon>
    </lineage>
</organism>
<feature type="chain" id="PRO_0000448473" description="Collagen alpha-2(I) chain">
    <location>
        <begin position="1"/>
        <end position="1002"/>
    </location>
</feature>
<feature type="region of interest" description="Disordered" evidence="2">
    <location>
        <begin position="1"/>
        <end position="1002"/>
    </location>
</feature>
<feature type="compositionally biased region" description="Low complexity" evidence="2">
    <location>
        <begin position="17"/>
        <end position="60"/>
    </location>
</feature>
<feature type="compositionally biased region" description="Low complexity" evidence="2">
    <location>
        <begin position="145"/>
        <end position="166"/>
    </location>
</feature>
<feature type="compositionally biased region" description="Low complexity" evidence="2">
    <location>
        <begin position="211"/>
        <end position="232"/>
    </location>
</feature>
<feature type="compositionally biased region" description="Gly residues" evidence="2">
    <location>
        <begin position="266"/>
        <end position="275"/>
    </location>
</feature>
<feature type="compositionally biased region" description="Low complexity" evidence="2">
    <location>
        <begin position="276"/>
        <end position="286"/>
    </location>
</feature>
<feature type="compositionally biased region" description="Gly residues" evidence="2">
    <location>
        <begin position="308"/>
        <end position="317"/>
    </location>
</feature>
<feature type="compositionally biased region" description="Low complexity" evidence="2">
    <location>
        <begin position="330"/>
        <end position="346"/>
    </location>
</feature>
<feature type="compositionally biased region" description="Low complexity" evidence="2">
    <location>
        <begin position="381"/>
        <end position="400"/>
    </location>
</feature>
<feature type="compositionally biased region" description="Gly residues" evidence="2">
    <location>
        <begin position="449"/>
        <end position="458"/>
    </location>
</feature>
<feature type="compositionally biased region" description="Low complexity" evidence="2">
    <location>
        <begin position="505"/>
        <end position="522"/>
    </location>
</feature>
<feature type="compositionally biased region" description="Low complexity" evidence="2">
    <location>
        <begin position="534"/>
        <end position="544"/>
    </location>
</feature>
<feature type="compositionally biased region" description="Gly residues" evidence="2">
    <location>
        <begin position="545"/>
        <end position="554"/>
    </location>
</feature>
<feature type="compositionally biased region" description="Low complexity" evidence="2">
    <location>
        <begin position="577"/>
        <end position="621"/>
    </location>
</feature>
<feature type="compositionally biased region" description="Low complexity" evidence="2">
    <location>
        <begin position="628"/>
        <end position="648"/>
    </location>
</feature>
<feature type="compositionally biased region" description="Basic and acidic residues" evidence="2">
    <location>
        <begin position="649"/>
        <end position="658"/>
    </location>
</feature>
<feature type="compositionally biased region" description="Low complexity" evidence="2">
    <location>
        <begin position="666"/>
        <end position="676"/>
    </location>
</feature>
<feature type="compositionally biased region" description="Gly residues" evidence="2">
    <location>
        <begin position="686"/>
        <end position="695"/>
    </location>
</feature>
<feature type="compositionally biased region" description="Low complexity" evidence="2">
    <location>
        <begin position="697"/>
        <end position="706"/>
    </location>
</feature>
<feature type="compositionally biased region" description="Gly residues" evidence="2">
    <location>
        <begin position="743"/>
        <end position="752"/>
    </location>
</feature>
<feature type="compositionally biased region" description="Low complexity" evidence="2">
    <location>
        <begin position="760"/>
        <end position="787"/>
    </location>
</feature>
<feature type="compositionally biased region" description="Low complexity" evidence="2">
    <location>
        <begin position="795"/>
        <end position="805"/>
    </location>
</feature>
<feature type="compositionally biased region" description="Gly residues" evidence="2">
    <location>
        <begin position="806"/>
        <end position="828"/>
    </location>
</feature>
<feature type="compositionally biased region" description="Basic and acidic residues" evidence="2">
    <location>
        <begin position="833"/>
        <end position="851"/>
    </location>
</feature>
<feature type="compositionally biased region" description="Low complexity" evidence="2">
    <location>
        <begin position="853"/>
        <end position="898"/>
    </location>
</feature>
<feature type="compositionally biased region" description="Basic and acidic residues" evidence="2">
    <location>
        <begin position="908"/>
        <end position="919"/>
    </location>
</feature>
<feature type="compositionally biased region" description="Pro residues" evidence="2">
    <location>
        <begin position="987"/>
        <end position="1002"/>
    </location>
</feature>
<feature type="modified residue" description="4-hydroxyproline" evidence="1">
    <location>
        <position position="10"/>
    </location>
</feature>
<feature type="modified residue" description="4-hydroxyproline" evidence="1">
    <location>
        <position position="13"/>
    </location>
</feature>
<feature type="modified residue" description="4-hydroxyproline" evidence="1">
    <location>
        <position position="28"/>
    </location>
</feature>
<feature type="modified residue" description="4-hydroxyproline" evidence="1">
    <location>
        <position position="34"/>
    </location>
</feature>
<feature type="modified residue" description="5-hydroxylysine; alternate" evidence="1">
    <location>
        <position position="89"/>
    </location>
</feature>
<feature type="modified residue" description="4-hydroxyproline" evidence="1">
    <location>
        <position position="352"/>
    </location>
</feature>
<feature type="modified residue" description="4-hydroxyproline" evidence="1">
    <location>
        <position position="355"/>
    </location>
</feature>
<feature type="glycosylation site" description="O-linked (Gal...) hydroxylysine; alternate" evidence="1">
    <location>
        <position position="89"/>
    </location>
</feature>
<feature type="unsure residue" description="L or I" evidence="4">
    <location>
        <position position="9"/>
    </location>
</feature>
<feature type="unsure residue" description="L or I" evidence="4">
    <location>
        <position position="21"/>
    </location>
</feature>
<feature type="unsure residue" description="L or I" evidence="4">
    <location>
        <position position="85"/>
    </location>
</feature>
<feature type="unsure residue" description="I or L" evidence="4">
    <location>
        <position position="91"/>
    </location>
</feature>
<feature type="unsure residue" description="L or I" evidence="4">
    <location>
        <position position="97"/>
    </location>
</feature>
<feature type="unsure residue" description="L or I" evidence="4">
    <location>
        <position position="100"/>
    </location>
</feature>
<feature type="unsure residue" description="L or I" evidence="4">
    <location>
        <position position="130"/>
    </location>
</feature>
<feature type="unsure residue" description="I or L" evidence="4">
    <location>
        <position position="161"/>
    </location>
</feature>
<feature type="unsure residue" description="L or I" evidence="4">
    <location>
        <position position="179"/>
    </location>
</feature>
<feature type="unsure residue" description="L or I" evidence="4">
    <location>
        <position position="198"/>
    </location>
</feature>
<feature type="unsure residue" description="L or I" evidence="4">
    <location>
        <position position="216"/>
    </location>
</feature>
<feature type="unsure residue" description="L or I" evidence="4">
    <location>
        <position position="225"/>
    </location>
</feature>
<feature type="unsure residue" description="L or I" evidence="4">
    <location>
        <position position="234"/>
    </location>
</feature>
<feature type="unsure residue" description="I or L" evidence="4">
    <location>
        <position position="240"/>
    </location>
</feature>
<feature type="unsure residue" description="L or I" evidence="4">
    <location>
        <position position="255"/>
    </location>
</feature>
<feature type="unsure residue" description="L or I" evidence="4">
    <location>
        <position position="309"/>
    </location>
</feature>
<feature type="unsure residue" description="L or I" evidence="4">
    <location>
        <position position="318"/>
    </location>
</feature>
<feature type="unsure residue" description="I or L" evidence="4">
    <location>
        <position position="328"/>
    </location>
</feature>
<feature type="unsure residue" description="L or I" evidence="4">
    <location>
        <position position="357"/>
    </location>
</feature>
<feature type="unsure residue" description="L or I" evidence="4">
    <location>
        <position position="363"/>
    </location>
</feature>
<feature type="unsure residue" description="L or I" evidence="4">
    <location>
        <position position="381"/>
    </location>
</feature>
<feature type="unsure residue" description="I or L" evidence="4">
    <location>
        <position position="384"/>
    </location>
</feature>
<feature type="unsure residue" description="I or L" evidence="4">
    <location>
        <position position="391"/>
    </location>
</feature>
<feature type="unsure residue" description="I or L" evidence="4">
    <location>
        <position position="403"/>
    </location>
</feature>
<feature type="unsure residue" description="L or I" evidence="4">
    <location>
        <position position="426"/>
    </location>
</feature>
<feature type="unsure residue" description="L or I" evidence="4">
    <location>
        <position position="447"/>
    </location>
</feature>
<feature type="unsure residue" description="L or I" evidence="4">
    <location>
        <position position="468"/>
    </location>
</feature>
<feature type="unsure residue" description="I or L" evidence="4">
    <location>
        <position position="486"/>
    </location>
</feature>
<feature type="unsure residue" description="L or I" evidence="4">
    <location>
        <position position="492"/>
    </location>
</feature>
<feature type="unsure residue" description="I or L" evidence="4">
    <location>
        <position position="517"/>
    </location>
</feature>
<feature type="unsure residue" description="L or I" evidence="4">
    <location>
        <position position="552"/>
    </location>
</feature>
<feature type="unsure residue" description="I or L" evidence="4">
    <location>
        <position position="561"/>
    </location>
</feature>
<feature type="unsure residue" description="L or I" evidence="4">
    <location>
        <position position="573"/>
    </location>
</feature>
<feature type="unsure residue" description="I or L" evidence="4">
    <location>
        <position position="663"/>
    </location>
</feature>
<feature type="unsure residue" description="I or L" evidence="4">
    <location>
        <position position="714"/>
    </location>
</feature>
<feature type="unsure residue" description="L or I" evidence="4">
    <location>
        <position position="729"/>
    </location>
</feature>
<feature type="unsure residue" description="L or I" evidence="4">
    <location>
        <position position="777"/>
    </location>
</feature>
<feature type="unsure residue" description="L or I" evidence="4">
    <location>
        <position position="778"/>
    </location>
</feature>
<feature type="unsure residue" description="I or L" evidence="4">
    <location>
        <position position="783"/>
    </location>
</feature>
<feature type="unsure residue" description="L or I" evidence="4">
    <location>
        <position position="784"/>
    </location>
</feature>
<feature type="unsure residue" description="L or I" evidence="4">
    <location>
        <position position="786"/>
    </location>
</feature>
<feature type="unsure residue" description="L or I" evidence="4">
    <location>
        <position position="795"/>
    </location>
</feature>
<feature type="unsure residue" description="L or I" evidence="4">
    <location>
        <position position="808"/>
    </location>
</feature>
<feature type="unsure residue" description="I or L" evidence="4">
    <location>
        <position position="810"/>
    </location>
</feature>
<feature type="unsure residue" description="L or I" evidence="4">
    <location>
        <position position="844"/>
    </location>
</feature>
<feature type="unsure residue" description="L or I" evidence="4">
    <location>
        <position position="896"/>
    </location>
</feature>
<feature type="unsure residue" description="I or L" evidence="4">
    <location>
        <position position="907"/>
    </location>
</feature>
<feature type="unsure residue" description="L or I" evidence="4">
    <location>
        <position position="922"/>
    </location>
</feature>
<feature type="unsure residue" description="L or I" evidence="4">
    <location>
        <position position="926"/>
    </location>
</feature>
<feature type="unsure residue" description="L or I" evidence="4">
    <location>
        <position position="929"/>
    </location>
</feature>
<feature type="unsure residue" description="L or I" evidence="4">
    <location>
        <position position="932"/>
    </location>
</feature>
<feature type="unsure residue" description="I or L" evidence="4">
    <location>
        <position position="977"/>
    </location>
</feature>
<feature type="non-consecutive residues" evidence="4">
    <location>
        <begin position="16"/>
        <end position="17"/>
    </location>
</feature>
<feature type="non-consecutive residues" evidence="4">
    <location>
        <begin position="68"/>
        <end position="69"/>
    </location>
</feature>
<feature type="non-consecutive residues" evidence="4">
    <location>
        <begin position="187"/>
        <end position="188"/>
    </location>
</feature>
<feature type="non-consecutive residues" evidence="4">
    <location>
        <begin position="810"/>
        <end position="811"/>
    </location>
</feature>
<feature type="non-consecutive residues" evidence="4">
    <location>
        <begin position="823"/>
        <end position="824"/>
    </location>
</feature>
<feature type="non-consecutive residues" evidence="4">
    <location>
        <begin position="835"/>
        <end position="836"/>
    </location>
</feature>
<feature type="non-consecutive residues" evidence="4">
    <location>
        <begin position="924"/>
        <end position="925"/>
    </location>
</feature>
<feature type="non-terminal residue" evidence="4">
    <location>
        <position position="1"/>
    </location>
</feature>
<feature type="non-terminal residue" evidence="4">
    <location>
        <position position="1002"/>
    </location>
</feature>
<sequence length="1002" mass="89326">SGGFDFSFLPQPPQEKGPMGLMGPRGPPGASGAPGPQGFQGPAGEPGEPGQTGPAGARGPAGPPGKAGGVVGPQGARGFPGTPGLPGFKGIRGHNGLDGLKGQPGAPGVKGEPGAPGENGTPGQTGARGLPGERGRVGAPGPAGSRGSDGSVGPVGPAGPIGSAGPPGFPGAPGPKGELGPVGNTGPGPAGPRGEQGLPGVSGPVGPPGNPGANGLTGAKGAAGLPGVAGAPGLPGPRGIPGPVGASGATGARGLVGEPGPAGSKGESGGKGEPGSAGPQGPPGSSGEEGKRGPSGESGSTGPTGPPGLRGGPGSRGLPGADGRAGVIGPAGARGASGPAGVRGPSGDTGRPGEPGLMGARGLPGSPGNVGPAGKEGPAGLPGIDGRPGPIGPAGARGEAGNIGFPGPKGPAGDPGKAGEKGHAGLAGNRGAPGPDGNNGAQGPPGLQGVQGGKGEQGPAGPPGFQGLPGPAGTTGEAGKPGERGIPGEFGLPGPAGPRGERGPPGESGAVGPSGAIGSRGPSGPPGPDGNKGEPGVVGAPGTAGPAGSGGLPGERGAAGIPGGKGEKGETGLRGEVGTTGRDGARGAPGAVGAPGPAGATGDRGEAGAAGPAGPAGPRGSPGERGEVGPAGPNGFAGPAGAAGQPGAKGERGTKGPKGENGIVGPTGPVGSAGPAGPNGPAGPAGSRGDGGPPGVTGFPGAAGRTGPPGPSGITGPPGPPGAAGKEGLRGPRGDQGPVGRTGETGAGGPPGFTGEKGPSGEPGTAGPPGTAGPQGLLGAPGILGLPGSRGERGLPGVAGAVGEPGPLGIGPPGARGPSGGVGPGVNGAPGEAGRDGPPGRDGLPGHKGERGYAGNAGPVGAAGAPGPHGAVGPAGKHGNRGEPGPVGSAGPVGALGPRGPSGPQGIRGDKGEAGDKGPRGLPGGLQGLPGLAGQHGDQGAPGPVGPAGPRGPAGPSGPPGKDGRTGHPGAVGPAGIRGSQGSQGPSGPPGPPGPPGPPGAS</sequence>
<name>CO1A2_GLORB</name>
<protein>
    <recommendedName>
        <fullName evidence="4">Collagen alpha-2(I) chain</fullName>
    </recommendedName>
    <alternativeName>
        <fullName evidence="1">Alpha-2 type I collagen</fullName>
    </alternativeName>
</protein>
<evidence type="ECO:0000250" key="1">
    <source>
        <dbReference type="UniProtKB" id="P08123"/>
    </source>
</evidence>
<evidence type="ECO:0000256" key="2">
    <source>
        <dbReference type="SAM" id="MobiDB-lite"/>
    </source>
</evidence>
<evidence type="ECO:0000269" key="3">
    <source>
    </source>
</evidence>
<evidence type="ECO:0000303" key="4">
    <source>
    </source>
</evidence>
<evidence type="ECO:0000305" key="5"/>
<accession>C0HLI4</accession>
<reference evidence="5" key="1">
    <citation type="journal article" date="2019" name="Nat. Ecol. Evol.">
        <title>Palaeoproteomics resolves sloth relationships.</title>
        <authorList>
            <person name="Presslee S."/>
            <person name="Slater G.J."/>
            <person name="Pujos F."/>
            <person name="Forasiepi A.M."/>
            <person name="Fischer R."/>
            <person name="Molloy K."/>
            <person name="Mackie M."/>
            <person name="Olsen J.V."/>
            <person name="Kramarz A."/>
            <person name="Taglioretti M."/>
            <person name="Scaglia F."/>
            <person name="Lezcano M."/>
            <person name="Lanata J.L."/>
            <person name="Southon J."/>
            <person name="Feranec R."/>
            <person name="Bloch J."/>
            <person name="Hajduk A."/>
            <person name="Martin F.M."/>
            <person name="Salas Gismondi R."/>
            <person name="Reguero M."/>
            <person name="de Muizon C."/>
            <person name="Greenwood A."/>
            <person name="Chait B.T."/>
            <person name="Penkman K."/>
            <person name="Collins M."/>
            <person name="MacPhee R.D.E."/>
        </authorList>
    </citation>
    <scope>PROTEIN SEQUENCE</scope>
    <scope>TISSUE SPECIFICITY</scope>
    <scope>IDENTIFICATION BY MASS SPECTROMETRY</scope>
    <source>
        <tissue evidence="4">Bone</tissue>
    </source>
</reference>
<dbReference type="GO" id="GO:0005576">
    <property type="term" value="C:extracellular region"/>
    <property type="evidence" value="ECO:0007669"/>
    <property type="project" value="UniProtKB-SubCell"/>
</dbReference>
<dbReference type="InterPro" id="IPR008160">
    <property type="entry name" value="Collagen"/>
</dbReference>
<dbReference type="InterPro" id="IPR050938">
    <property type="entry name" value="Collagen_Structural_Proteins"/>
</dbReference>
<dbReference type="PANTHER" id="PTHR37456:SF6">
    <property type="entry name" value="COLLAGEN ALPHA-1(XXIII) CHAIN-LIKE ISOFORM X2"/>
    <property type="match status" value="1"/>
</dbReference>
<dbReference type="PANTHER" id="PTHR37456">
    <property type="entry name" value="SI:CH211-266K2.1"/>
    <property type="match status" value="1"/>
</dbReference>
<dbReference type="Pfam" id="PF01391">
    <property type="entry name" value="Collagen"/>
    <property type="match status" value="5"/>
</dbReference>
<proteinExistence type="evidence at protein level"/>
<keyword id="KW-0903">Direct protein sequencing</keyword>
<keyword id="KW-0952">Extinct organism protein</keyword>
<keyword id="KW-0272">Extracellular matrix</keyword>
<keyword id="KW-0325">Glycoprotein</keyword>
<keyword id="KW-0379">Hydroxylation</keyword>
<keyword id="KW-0873">Pyrrolidone carboxylic acid</keyword>
<keyword id="KW-0964">Secreted</keyword>
<comment type="function">
    <text evidence="5">Type I collagen is a member of group I collagen (fibrillar forming collagen).</text>
</comment>
<comment type="subunit">
    <text evidence="1">Trimers of one alpha 2(I) and two alpha 1(I) chains. Interacts (via C-terminus) with TMEM131 (via PapD-L domain); the interaction is direct and is involved in assembly and TRAPPIII ER-to-Golgi transport complex-dependent secretion of collagen.</text>
</comment>
<comment type="subcellular location">
    <subcellularLocation>
        <location>Secreted</location>
    </subcellularLocation>
    <subcellularLocation>
        <location>Secreted</location>
        <location>Extracellular space</location>
    </subcellularLocation>
    <subcellularLocation>
        <location evidence="5">Secreted</location>
        <location evidence="5">Extracellular space</location>
        <location evidence="5">Extracellular matrix</location>
    </subcellularLocation>
</comment>
<comment type="tissue specificity">
    <text evidence="3">Expressed in bones.</text>
</comment>
<comment type="PTM">
    <text evidence="1">Prolines at the third position of the tripeptide repeating unit (G-X-Y) are hydroxylated in some or all of the chains.</text>
</comment>
<comment type="miscellaneous">
    <text evidence="3">These protein fragments were extracted from an ancient skull bone collected in Buenos Aires in Argentina.</text>
</comment>
<comment type="similarity">
    <text evidence="5">Belongs to the fibrillar collagen family.</text>
</comment>